<organism>
    <name type="scientific">Picea abies</name>
    <name type="common">Norway spruce</name>
    <name type="synonym">Picea excelsa</name>
    <dbReference type="NCBI Taxonomy" id="3329"/>
    <lineage>
        <taxon>Eukaryota</taxon>
        <taxon>Viridiplantae</taxon>
        <taxon>Streptophyta</taxon>
        <taxon>Embryophyta</taxon>
        <taxon>Tracheophyta</taxon>
        <taxon>Spermatophyta</taxon>
        <taxon>Pinopsida</taxon>
        <taxon>Pinidae</taxon>
        <taxon>Conifers I</taxon>
        <taxon>Pinales</taxon>
        <taxon>Pinaceae</taxon>
        <taxon>Picea</taxon>
    </lineage>
</organism>
<accession>O47037</accession>
<keyword id="KW-0066">ATP synthesis</keyword>
<keyword id="KW-0067">ATP-binding</keyword>
<keyword id="KW-0139">CF(1)</keyword>
<keyword id="KW-0150">Chloroplast</keyword>
<keyword id="KW-0375">Hydrogen ion transport</keyword>
<keyword id="KW-0406">Ion transport</keyword>
<keyword id="KW-0472">Membrane</keyword>
<keyword id="KW-0547">Nucleotide-binding</keyword>
<keyword id="KW-0934">Plastid</keyword>
<keyword id="KW-0793">Thylakoid</keyword>
<keyword id="KW-1278">Translocase</keyword>
<keyword id="KW-0813">Transport</keyword>
<sequence length="488" mass="52535">MRTNPLVLGVSALVEKNVGRIAQIIGPVLDVSFPPGNMPNIYNSLIVKGQGTAGQEIQVTCEVQQLLGNHKVRAVAMSATDGLTRGMRVIDTGAPLSVPVGGATLGRIFNVLGEPVDNLGPVDARITSPIHRSAPAFTELDTKLSIFETGIKVVDLLAPYRRGGKIGLFGGAGVGKTVLIMELINNIAKAHGGVSVFGGVGERTREGNDLYMEMKESGVIDEQNISESKVALVYGQMNEPPGARMRVGLTALTMAEYFRDVNEQDVLSFIDNIFRFVQAGSEVSALLGRMPSAVGYQPTLATEMGSLQERITSTKRGSITSIQAVYVPADDLTDPAPATTFAHLDATTVPSRGLAAKGIYPAVDPLDSTSTMLQPWIVGEEHYETAQGVKQTLQRYKELQDIIAIPGLDELSEEDRLIVARARKIERFLSQPFFVAEVFTGFPGKYVGLMETIRGFQMILSGELEQSFYLVGNIDEATAKAMNSKTES</sequence>
<comment type="function">
    <text evidence="1">Produces ATP from ADP in the presence of a proton gradient across the membrane. The catalytic sites are hosted primarily by the beta subunits.</text>
</comment>
<comment type="catalytic activity">
    <reaction evidence="1">
        <text>ATP + H2O + 4 H(+)(in) = ADP + phosphate + 5 H(+)(out)</text>
        <dbReference type="Rhea" id="RHEA:57720"/>
        <dbReference type="ChEBI" id="CHEBI:15377"/>
        <dbReference type="ChEBI" id="CHEBI:15378"/>
        <dbReference type="ChEBI" id="CHEBI:30616"/>
        <dbReference type="ChEBI" id="CHEBI:43474"/>
        <dbReference type="ChEBI" id="CHEBI:456216"/>
        <dbReference type="EC" id="7.1.2.2"/>
    </reaction>
</comment>
<comment type="subunit">
    <text evidence="1">F-type ATPases have 2 components, CF(1) - the catalytic core - and CF(0) - the membrane proton channel. CF(1) has five subunits: alpha(3), beta(3), gamma(1), delta(1), epsilon(1). CF(0) has four main subunits: a(1), b(1), b'(1) and c(9-12).</text>
</comment>
<comment type="subcellular location">
    <subcellularLocation>
        <location evidence="1">Plastid</location>
        <location evidence="1">Chloroplast thylakoid membrane</location>
        <topology evidence="1">Peripheral membrane protein</topology>
    </subcellularLocation>
</comment>
<comment type="similarity">
    <text evidence="1">Belongs to the ATPase alpha/beta chains family.</text>
</comment>
<feature type="chain" id="PRO_0000144541" description="ATP synthase subunit beta, chloroplastic">
    <location>
        <begin position="1"/>
        <end position="488"/>
    </location>
</feature>
<feature type="binding site" evidence="1">
    <location>
        <begin position="170"/>
        <end position="177"/>
    </location>
    <ligand>
        <name>ATP</name>
        <dbReference type="ChEBI" id="CHEBI:30616"/>
    </ligand>
</feature>
<dbReference type="EC" id="7.1.2.2" evidence="1"/>
<dbReference type="EMBL" id="AJ001004">
    <property type="protein sequence ID" value="CAA04458.1"/>
    <property type="molecule type" value="Genomic_DNA"/>
</dbReference>
<dbReference type="PIR" id="T14829">
    <property type="entry name" value="T14829"/>
</dbReference>
<dbReference type="SMR" id="O47037"/>
<dbReference type="GO" id="GO:0009535">
    <property type="term" value="C:chloroplast thylakoid membrane"/>
    <property type="evidence" value="ECO:0007669"/>
    <property type="project" value="UniProtKB-SubCell"/>
</dbReference>
<dbReference type="GO" id="GO:0005739">
    <property type="term" value="C:mitochondrion"/>
    <property type="evidence" value="ECO:0007669"/>
    <property type="project" value="GOC"/>
</dbReference>
<dbReference type="GO" id="GO:0045259">
    <property type="term" value="C:proton-transporting ATP synthase complex"/>
    <property type="evidence" value="ECO:0007669"/>
    <property type="project" value="UniProtKB-KW"/>
</dbReference>
<dbReference type="GO" id="GO:0005524">
    <property type="term" value="F:ATP binding"/>
    <property type="evidence" value="ECO:0007669"/>
    <property type="project" value="UniProtKB-UniRule"/>
</dbReference>
<dbReference type="GO" id="GO:0016887">
    <property type="term" value="F:ATP hydrolysis activity"/>
    <property type="evidence" value="ECO:0007669"/>
    <property type="project" value="InterPro"/>
</dbReference>
<dbReference type="GO" id="GO:0046933">
    <property type="term" value="F:proton-transporting ATP synthase activity, rotational mechanism"/>
    <property type="evidence" value="ECO:0007669"/>
    <property type="project" value="UniProtKB-UniRule"/>
</dbReference>
<dbReference type="GO" id="GO:0042776">
    <property type="term" value="P:proton motive force-driven mitochondrial ATP synthesis"/>
    <property type="evidence" value="ECO:0007669"/>
    <property type="project" value="TreeGrafter"/>
</dbReference>
<dbReference type="CDD" id="cd18110">
    <property type="entry name" value="ATP-synt_F1_beta_C"/>
    <property type="match status" value="1"/>
</dbReference>
<dbReference type="CDD" id="cd18115">
    <property type="entry name" value="ATP-synt_F1_beta_N"/>
    <property type="match status" value="1"/>
</dbReference>
<dbReference type="CDD" id="cd01133">
    <property type="entry name" value="F1-ATPase_beta_CD"/>
    <property type="match status" value="1"/>
</dbReference>
<dbReference type="FunFam" id="1.10.1140.10:FF:000001">
    <property type="entry name" value="ATP synthase subunit beta"/>
    <property type="match status" value="1"/>
</dbReference>
<dbReference type="FunFam" id="3.40.50.12240:FF:000006">
    <property type="entry name" value="ATP synthase subunit beta"/>
    <property type="match status" value="1"/>
</dbReference>
<dbReference type="FunFam" id="3.40.50.300:FF:000004">
    <property type="entry name" value="ATP synthase subunit beta"/>
    <property type="match status" value="1"/>
</dbReference>
<dbReference type="FunFam" id="2.40.10.170:FF:000002">
    <property type="entry name" value="ATP synthase subunit beta, chloroplastic"/>
    <property type="match status" value="1"/>
</dbReference>
<dbReference type="Gene3D" id="2.40.10.170">
    <property type="match status" value="1"/>
</dbReference>
<dbReference type="Gene3D" id="1.10.1140.10">
    <property type="entry name" value="Bovine Mitochondrial F1-atpase, Atp Synthase Beta Chain, Chain D, domain 3"/>
    <property type="match status" value="1"/>
</dbReference>
<dbReference type="Gene3D" id="3.40.50.300">
    <property type="entry name" value="P-loop containing nucleotide triphosphate hydrolases"/>
    <property type="match status" value="1"/>
</dbReference>
<dbReference type="HAMAP" id="MF_01347">
    <property type="entry name" value="ATP_synth_beta_bact"/>
    <property type="match status" value="1"/>
</dbReference>
<dbReference type="InterPro" id="IPR003593">
    <property type="entry name" value="AAA+_ATPase"/>
</dbReference>
<dbReference type="InterPro" id="IPR055190">
    <property type="entry name" value="ATP-synt_VA_C"/>
</dbReference>
<dbReference type="InterPro" id="IPR005722">
    <property type="entry name" value="ATP_synth_F1_bsu"/>
</dbReference>
<dbReference type="InterPro" id="IPR020003">
    <property type="entry name" value="ATPase_a/bsu_AS"/>
</dbReference>
<dbReference type="InterPro" id="IPR050053">
    <property type="entry name" value="ATPase_alpha/beta_chains"/>
</dbReference>
<dbReference type="InterPro" id="IPR004100">
    <property type="entry name" value="ATPase_F1/V1/A1_a/bsu_N"/>
</dbReference>
<dbReference type="InterPro" id="IPR036121">
    <property type="entry name" value="ATPase_F1/V1/A1_a/bsu_N_sf"/>
</dbReference>
<dbReference type="InterPro" id="IPR000194">
    <property type="entry name" value="ATPase_F1/V1/A1_a/bsu_nucl-bd"/>
</dbReference>
<dbReference type="InterPro" id="IPR024034">
    <property type="entry name" value="ATPase_F1/V1_b/a_C"/>
</dbReference>
<dbReference type="InterPro" id="IPR027417">
    <property type="entry name" value="P-loop_NTPase"/>
</dbReference>
<dbReference type="NCBIfam" id="TIGR01039">
    <property type="entry name" value="atpD"/>
    <property type="match status" value="1"/>
</dbReference>
<dbReference type="PANTHER" id="PTHR15184">
    <property type="entry name" value="ATP SYNTHASE"/>
    <property type="match status" value="1"/>
</dbReference>
<dbReference type="PANTHER" id="PTHR15184:SF71">
    <property type="entry name" value="ATP SYNTHASE SUBUNIT BETA, MITOCHONDRIAL"/>
    <property type="match status" value="1"/>
</dbReference>
<dbReference type="Pfam" id="PF00006">
    <property type="entry name" value="ATP-synt_ab"/>
    <property type="match status" value="1"/>
</dbReference>
<dbReference type="Pfam" id="PF02874">
    <property type="entry name" value="ATP-synt_ab_N"/>
    <property type="match status" value="1"/>
</dbReference>
<dbReference type="Pfam" id="PF22919">
    <property type="entry name" value="ATP-synt_VA_C"/>
    <property type="match status" value="1"/>
</dbReference>
<dbReference type="SMART" id="SM00382">
    <property type="entry name" value="AAA"/>
    <property type="match status" value="1"/>
</dbReference>
<dbReference type="SUPFAM" id="SSF47917">
    <property type="entry name" value="C-terminal domain of alpha and beta subunits of F1 ATP synthase"/>
    <property type="match status" value="1"/>
</dbReference>
<dbReference type="SUPFAM" id="SSF50615">
    <property type="entry name" value="N-terminal domain of alpha and beta subunits of F1 ATP synthase"/>
    <property type="match status" value="1"/>
</dbReference>
<dbReference type="SUPFAM" id="SSF52540">
    <property type="entry name" value="P-loop containing nucleoside triphosphate hydrolases"/>
    <property type="match status" value="1"/>
</dbReference>
<dbReference type="PROSITE" id="PS00152">
    <property type="entry name" value="ATPASE_ALPHA_BETA"/>
    <property type="match status" value="1"/>
</dbReference>
<name>ATPB_PICAB</name>
<proteinExistence type="inferred from homology"/>
<reference key="1">
    <citation type="submission" date="1997-08" db="EMBL/GenBank/DDBJ databases">
        <title>Picea abies chloroplast genome fragment of 8,7 kb including atpE, atpB, rbcL, trnR, accD, and psaI.</title>
        <authorList>
            <person name="Sutter A."/>
            <person name="Philipps A."/>
            <person name="Wild A."/>
        </authorList>
    </citation>
    <scope>NUCLEOTIDE SEQUENCE [GENOMIC DNA]</scope>
</reference>
<evidence type="ECO:0000255" key="1">
    <source>
        <dbReference type="HAMAP-Rule" id="MF_01347"/>
    </source>
</evidence>
<gene>
    <name evidence="1" type="primary">atpB</name>
</gene>
<protein>
    <recommendedName>
        <fullName evidence="1">ATP synthase subunit beta, chloroplastic</fullName>
        <ecNumber evidence="1">7.1.2.2</ecNumber>
    </recommendedName>
    <alternativeName>
        <fullName evidence="1">ATP synthase F1 sector subunit beta</fullName>
    </alternativeName>
    <alternativeName>
        <fullName evidence="1">F-ATPase subunit beta</fullName>
    </alternativeName>
</protein>
<geneLocation type="chloroplast"/>